<comment type="function">
    <text evidence="1">Binds as a heterodimer with protein bS6 to the central domain of the 16S rRNA, where it helps stabilize the platform of the 30S subunit.</text>
</comment>
<comment type="subunit">
    <text evidence="1">Part of the 30S ribosomal subunit. Forms a tight heterodimer with protein bS6.</text>
</comment>
<comment type="similarity">
    <text evidence="1">Belongs to the bacterial ribosomal protein bS18 family.</text>
</comment>
<proteinExistence type="inferred from homology"/>
<sequence>MAQQRRGGRRRRKVDFIAANHIDYIDYKDVDLLKRFISERGKILPRRVTGTSAKNQRKLTVAIKRARVMGLLPFVAED</sequence>
<organism>
    <name type="scientific">Lactobacillus johnsonii (strain CNCM I-12250 / La1 / NCC 533)</name>
    <dbReference type="NCBI Taxonomy" id="257314"/>
    <lineage>
        <taxon>Bacteria</taxon>
        <taxon>Bacillati</taxon>
        <taxon>Bacillota</taxon>
        <taxon>Bacilli</taxon>
        <taxon>Lactobacillales</taxon>
        <taxon>Lactobacillaceae</taxon>
        <taxon>Lactobacillus</taxon>
    </lineage>
</organism>
<reference key="1">
    <citation type="journal article" date="2004" name="Proc. Natl. Acad. Sci. U.S.A.">
        <title>The genome sequence of the probiotic intestinal bacterium Lactobacillus johnsonii NCC 533.</title>
        <authorList>
            <person name="Pridmore R.D."/>
            <person name="Berger B."/>
            <person name="Desiere F."/>
            <person name="Vilanova D."/>
            <person name="Barretto C."/>
            <person name="Pittet A.-C."/>
            <person name="Zwahlen M.-C."/>
            <person name="Rouvet M."/>
            <person name="Altermann E."/>
            <person name="Barrangou R."/>
            <person name="Mollet B."/>
            <person name="Mercenier A."/>
            <person name="Klaenhammer T."/>
            <person name="Arigoni F."/>
            <person name="Schell M.A."/>
        </authorList>
    </citation>
    <scope>NUCLEOTIDE SEQUENCE [LARGE SCALE GENOMIC DNA]</scope>
    <source>
        <strain>CNCM I-1225 / La1 / NCC 533</strain>
    </source>
</reference>
<dbReference type="EMBL" id="AE017198">
    <property type="protein sequence ID" value="AAS07989.1"/>
    <property type="molecule type" value="Genomic_DNA"/>
</dbReference>
<dbReference type="RefSeq" id="WP_003649728.1">
    <property type="nucleotide sequence ID" value="NC_005362.1"/>
</dbReference>
<dbReference type="SMR" id="Q74M26"/>
<dbReference type="GeneID" id="83569444"/>
<dbReference type="KEGG" id="ljo:LJ_0008"/>
<dbReference type="eggNOG" id="COG0238">
    <property type="taxonomic scope" value="Bacteria"/>
</dbReference>
<dbReference type="HOGENOM" id="CLU_148710_2_2_9"/>
<dbReference type="Proteomes" id="UP000000581">
    <property type="component" value="Chromosome"/>
</dbReference>
<dbReference type="GO" id="GO:0022627">
    <property type="term" value="C:cytosolic small ribosomal subunit"/>
    <property type="evidence" value="ECO:0007669"/>
    <property type="project" value="TreeGrafter"/>
</dbReference>
<dbReference type="GO" id="GO:0070181">
    <property type="term" value="F:small ribosomal subunit rRNA binding"/>
    <property type="evidence" value="ECO:0007669"/>
    <property type="project" value="TreeGrafter"/>
</dbReference>
<dbReference type="GO" id="GO:0003735">
    <property type="term" value="F:structural constituent of ribosome"/>
    <property type="evidence" value="ECO:0007669"/>
    <property type="project" value="InterPro"/>
</dbReference>
<dbReference type="GO" id="GO:0006412">
    <property type="term" value="P:translation"/>
    <property type="evidence" value="ECO:0007669"/>
    <property type="project" value="UniProtKB-UniRule"/>
</dbReference>
<dbReference type="FunFam" id="4.10.640.10:FF:000003">
    <property type="entry name" value="30S ribosomal protein S18"/>
    <property type="match status" value="1"/>
</dbReference>
<dbReference type="Gene3D" id="4.10.640.10">
    <property type="entry name" value="Ribosomal protein S18"/>
    <property type="match status" value="1"/>
</dbReference>
<dbReference type="HAMAP" id="MF_00270">
    <property type="entry name" value="Ribosomal_bS18"/>
    <property type="match status" value="1"/>
</dbReference>
<dbReference type="InterPro" id="IPR001648">
    <property type="entry name" value="Ribosomal_bS18"/>
</dbReference>
<dbReference type="InterPro" id="IPR018275">
    <property type="entry name" value="Ribosomal_bS18_CS"/>
</dbReference>
<dbReference type="InterPro" id="IPR036870">
    <property type="entry name" value="Ribosomal_bS18_sf"/>
</dbReference>
<dbReference type="NCBIfam" id="TIGR00165">
    <property type="entry name" value="S18"/>
    <property type="match status" value="1"/>
</dbReference>
<dbReference type="PANTHER" id="PTHR13479">
    <property type="entry name" value="30S RIBOSOMAL PROTEIN S18"/>
    <property type="match status" value="1"/>
</dbReference>
<dbReference type="PANTHER" id="PTHR13479:SF40">
    <property type="entry name" value="SMALL RIBOSOMAL SUBUNIT PROTEIN BS18M"/>
    <property type="match status" value="1"/>
</dbReference>
<dbReference type="Pfam" id="PF01084">
    <property type="entry name" value="Ribosomal_S18"/>
    <property type="match status" value="1"/>
</dbReference>
<dbReference type="PRINTS" id="PR00974">
    <property type="entry name" value="RIBOSOMALS18"/>
</dbReference>
<dbReference type="SUPFAM" id="SSF46911">
    <property type="entry name" value="Ribosomal protein S18"/>
    <property type="match status" value="1"/>
</dbReference>
<dbReference type="PROSITE" id="PS00057">
    <property type="entry name" value="RIBOSOMAL_S18"/>
    <property type="match status" value="1"/>
</dbReference>
<gene>
    <name evidence="1" type="primary">rpsR</name>
    <name type="ordered locus">LJ_0008</name>
</gene>
<name>RS18_LACJO</name>
<evidence type="ECO:0000255" key="1">
    <source>
        <dbReference type="HAMAP-Rule" id="MF_00270"/>
    </source>
</evidence>
<evidence type="ECO:0000305" key="2"/>
<feature type="chain" id="PRO_0000111165" description="Small ribosomal subunit protein bS18">
    <location>
        <begin position="1"/>
        <end position="78"/>
    </location>
</feature>
<accession>Q74M26</accession>
<protein>
    <recommendedName>
        <fullName evidence="1">Small ribosomal subunit protein bS18</fullName>
    </recommendedName>
    <alternativeName>
        <fullName evidence="2">30S ribosomal protein S18</fullName>
    </alternativeName>
</protein>
<keyword id="KW-0687">Ribonucleoprotein</keyword>
<keyword id="KW-0689">Ribosomal protein</keyword>
<keyword id="KW-0694">RNA-binding</keyword>
<keyword id="KW-0699">rRNA-binding</keyword>